<proteinExistence type="inferred from homology"/>
<evidence type="ECO:0000255" key="1">
    <source>
        <dbReference type="HAMAP-Rule" id="MF_00238"/>
    </source>
</evidence>
<comment type="catalytic activity">
    <reaction evidence="1">
        <text>CMP + ATP = CDP + ADP</text>
        <dbReference type="Rhea" id="RHEA:11600"/>
        <dbReference type="ChEBI" id="CHEBI:30616"/>
        <dbReference type="ChEBI" id="CHEBI:58069"/>
        <dbReference type="ChEBI" id="CHEBI:60377"/>
        <dbReference type="ChEBI" id="CHEBI:456216"/>
        <dbReference type="EC" id="2.7.4.25"/>
    </reaction>
</comment>
<comment type="catalytic activity">
    <reaction evidence="1">
        <text>dCMP + ATP = dCDP + ADP</text>
        <dbReference type="Rhea" id="RHEA:25094"/>
        <dbReference type="ChEBI" id="CHEBI:30616"/>
        <dbReference type="ChEBI" id="CHEBI:57566"/>
        <dbReference type="ChEBI" id="CHEBI:58593"/>
        <dbReference type="ChEBI" id="CHEBI:456216"/>
        <dbReference type="EC" id="2.7.4.25"/>
    </reaction>
</comment>
<comment type="subcellular location">
    <subcellularLocation>
        <location evidence="1">Cytoplasm</location>
    </subcellularLocation>
</comment>
<comment type="similarity">
    <text evidence="1">Belongs to the cytidylate kinase family. Type 1 subfamily.</text>
</comment>
<sequence length="229" mass="24799">MNIKAPVITIDGPSGSGKGTIAGKLAKHLGWCLLDSGALYRLLAFAARNHGVDLTNEESLKLLAAHLDVQFLGATENHPQRIILEGDDVTDDLRNEQVGAWASQVAALPAVRDALLQRQRAFQEPPGLVADGRDMGTVVFPDAPLKIFLTASAEERARRRYLQLKGKVDGVSLSSLLDEIRARDERDTQRAVAPLKPAADAIQLDSTELSIDQVLQRILSEIAIRDIAG</sequence>
<feature type="chain" id="PRO_1000048252" description="Cytidylate kinase">
    <location>
        <begin position="1"/>
        <end position="229"/>
    </location>
</feature>
<feature type="binding site" evidence="1">
    <location>
        <begin position="12"/>
        <end position="20"/>
    </location>
    <ligand>
        <name>ATP</name>
        <dbReference type="ChEBI" id="CHEBI:30616"/>
    </ligand>
</feature>
<reference key="1">
    <citation type="journal article" date="2005" name="Nat. Biotechnol.">
        <title>Complete genome sequence of the plant commensal Pseudomonas fluorescens Pf-5.</title>
        <authorList>
            <person name="Paulsen I.T."/>
            <person name="Press C.M."/>
            <person name="Ravel J."/>
            <person name="Kobayashi D.Y."/>
            <person name="Myers G.S.A."/>
            <person name="Mavrodi D.V."/>
            <person name="DeBoy R.T."/>
            <person name="Seshadri R."/>
            <person name="Ren Q."/>
            <person name="Madupu R."/>
            <person name="Dodson R.J."/>
            <person name="Durkin A.S."/>
            <person name="Brinkac L.M."/>
            <person name="Daugherty S.C."/>
            <person name="Sullivan S.A."/>
            <person name="Rosovitz M.J."/>
            <person name="Gwinn M.L."/>
            <person name="Zhou L."/>
            <person name="Schneider D.J."/>
            <person name="Cartinhour S.W."/>
            <person name="Nelson W.C."/>
            <person name="Weidman J."/>
            <person name="Watkins K."/>
            <person name="Tran K."/>
            <person name="Khouri H."/>
            <person name="Pierson E.A."/>
            <person name="Pierson L.S. III"/>
            <person name="Thomashow L.S."/>
            <person name="Loper J.E."/>
        </authorList>
    </citation>
    <scope>NUCLEOTIDE SEQUENCE [LARGE SCALE GENOMIC DNA]</scope>
    <source>
        <strain>ATCC BAA-477 / NRRL B-23932 / Pf-5</strain>
    </source>
</reference>
<dbReference type="EC" id="2.7.4.25" evidence="1"/>
<dbReference type="EMBL" id="CP000076">
    <property type="protein sequence ID" value="AAY93564.1"/>
    <property type="molecule type" value="Genomic_DNA"/>
</dbReference>
<dbReference type="RefSeq" id="WP_011062580.1">
    <property type="nucleotide sequence ID" value="NC_004129.6"/>
</dbReference>
<dbReference type="SMR" id="Q4K8N2"/>
<dbReference type="STRING" id="220664.PFL_4309"/>
<dbReference type="GeneID" id="57477386"/>
<dbReference type="KEGG" id="pfl:PFL_4309"/>
<dbReference type="PATRIC" id="fig|220664.5.peg.4414"/>
<dbReference type="eggNOG" id="COG0283">
    <property type="taxonomic scope" value="Bacteria"/>
</dbReference>
<dbReference type="HOGENOM" id="CLU_079959_0_2_6"/>
<dbReference type="Proteomes" id="UP000008540">
    <property type="component" value="Chromosome"/>
</dbReference>
<dbReference type="GO" id="GO:0005829">
    <property type="term" value="C:cytosol"/>
    <property type="evidence" value="ECO:0007669"/>
    <property type="project" value="TreeGrafter"/>
</dbReference>
<dbReference type="GO" id="GO:0005524">
    <property type="term" value="F:ATP binding"/>
    <property type="evidence" value="ECO:0007669"/>
    <property type="project" value="UniProtKB-UniRule"/>
</dbReference>
<dbReference type="GO" id="GO:0036430">
    <property type="term" value="F:CMP kinase activity"/>
    <property type="evidence" value="ECO:0007669"/>
    <property type="project" value="RHEA"/>
</dbReference>
<dbReference type="GO" id="GO:0036431">
    <property type="term" value="F:dCMP kinase activity"/>
    <property type="evidence" value="ECO:0007669"/>
    <property type="project" value="RHEA"/>
</dbReference>
<dbReference type="GO" id="GO:0015949">
    <property type="term" value="P:nucleobase-containing small molecule interconversion"/>
    <property type="evidence" value="ECO:0007669"/>
    <property type="project" value="TreeGrafter"/>
</dbReference>
<dbReference type="GO" id="GO:0006220">
    <property type="term" value="P:pyrimidine nucleotide metabolic process"/>
    <property type="evidence" value="ECO:0007669"/>
    <property type="project" value="UniProtKB-UniRule"/>
</dbReference>
<dbReference type="CDD" id="cd02020">
    <property type="entry name" value="CMPK"/>
    <property type="match status" value="1"/>
</dbReference>
<dbReference type="FunFam" id="3.40.50.300:FF:000262">
    <property type="entry name" value="Cytidylate kinase"/>
    <property type="match status" value="1"/>
</dbReference>
<dbReference type="Gene3D" id="3.40.50.300">
    <property type="entry name" value="P-loop containing nucleotide triphosphate hydrolases"/>
    <property type="match status" value="1"/>
</dbReference>
<dbReference type="HAMAP" id="MF_00238">
    <property type="entry name" value="Cytidyl_kinase_type1"/>
    <property type="match status" value="1"/>
</dbReference>
<dbReference type="InterPro" id="IPR003136">
    <property type="entry name" value="Cytidylate_kin"/>
</dbReference>
<dbReference type="InterPro" id="IPR011994">
    <property type="entry name" value="Cytidylate_kinase_dom"/>
</dbReference>
<dbReference type="InterPro" id="IPR027417">
    <property type="entry name" value="P-loop_NTPase"/>
</dbReference>
<dbReference type="NCBIfam" id="TIGR00017">
    <property type="entry name" value="cmk"/>
    <property type="match status" value="1"/>
</dbReference>
<dbReference type="PANTHER" id="PTHR21299:SF2">
    <property type="entry name" value="CYTIDYLATE KINASE"/>
    <property type="match status" value="1"/>
</dbReference>
<dbReference type="PANTHER" id="PTHR21299">
    <property type="entry name" value="CYTIDYLATE KINASE/PANTOATE-BETA-ALANINE LIGASE"/>
    <property type="match status" value="1"/>
</dbReference>
<dbReference type="Pfam" id="PF02224">
    <property type="entry name" value="Cytidylate_kin"/>
    <property type="match status" value="1"/>
</dbReference>
<dbReference type="SUPFAM" id="SSF52540">
    <property type="entry name" value="P-loop containing nucleoside triphosphate hydrolases"/>
    <property type="match status" value="1"/>
</dbReference>
<protein>
    <recommendedName>
        <fullName evidence="1">Cytidylate kinase</fullName>
        <shortName evidence="1">CK</shortName>
        <ecNumber evidence="1">2.7.4.25</ecNumber>
    </recommendedName>
    <alternativeName>
        <fullName evidence="1">Cytidine monophosphate kinase</fullName>
        <shortName evidence="1">CMP kinase</shortName>
    </alternativeName>
</protein>
<name>KCY_PSEF5</name>
<gene>
    <name evidence="1" type="primary">cmk</name>
    <name type="ordered locus">PFL_4309</name>
</gene>
<organism>
    <name type="scientific">Pseudomonas fluorescens (strain ATCC BAA-477 / NRRL B-23932 / Pf-5)</name>
    <dbReference type="NCBI Taxonomy" id="220664"/>
    <lineage>
        <taxon>Bacteria</taxon>
        <taxon>Pseudomonadati</taxon>
        <taxon>Pseudomonadota</taxon>
        <taxon>Gammaproteobacteria</taxon>
        <taxon>Pseudomonadales</taxon>
        <taxon>Pseudomonadaceae</taxon>
        <taxon>Pseudomonas</taxon>
    </lineage>
</organism>
<accession>Q4K8N2</accession>
<keyword id="KW-0067">ATP-binding</keyword>
<keyword id="KW-0963">Cytoplasm</keyword>
<keyword id="KW-0418">Kinase</keyword>
<keyword id="KW-0547">Nucleotide-binding</keyword>
<keyword id="KW-0808">Transferase</keyword>